<reference key="1">
    <citation type="journal article" date="2004" name="Genome Res.">
        <title>The status, quality, and expansion of the NIH full-length cDNA project: the Mammalian Gene Collection (MGC).</title>
        <authorList>
            <consortium name="The MGC Project Team"/>
        </authorList>
    </citation>
    <scope>NUCLEOTIDE SEQUENCE [LARGE SCALE MRNA]</scope>
    <source>
        <tissue>Testis</tissue>
    </source>
</reference>
<reference key="2">
    <citation type="journal article" date="2001" name="Mol. Hum. Reprod.">
        <title>Expression and function of the HSD-3.8 gene encoding a testis-specific protein.</title>
        <authorList>
            <person name="Lin W."/>
            <person name="Zhou X.F."/>
            <person name="Zhang M.L."/>
            <person name="Li Y."/>
            <person name="Miao S.Y."/>
            <person name="Wang L.F."/>
            <person name="Zong S.D."/>
            <person name="Koide S.S."/>
        </authorList>
    </citation>
    <scope>FUNCTION</scope>
</reference>
<reference key="3">
    <citation type="journal article" date="2012" name="Nat. Commun.">
        <title>Quantitative maps of protein phosphorylation sites across 14 different rat organs and tissues.</title>
        <authorList>
            <person name="Lundby A."/>
            <person name="Secher A."/>
            <person name="Lage K."/>
            <person name="Nordsborg N.B."/>
            <person name="Dmytriyev A."/>
            <person name="Lundby C."/>
            <person name="Olsen J.V."/>
        </authorList>
    </citation>
    <scope>PHOSPHORYLATION [LARGE SCALE ANALYSIS] AT SER-351; SER-703; SER-739 AND SER-740</scope>
    <scope>IDENTIFICATION BY MASS SPECTROMETRY [LARGE SCALE ANALYSIS]</scope>
</reference>
<accession>Q5U2X2</accession>
<organism>
    <name type="scientific">Rattus norvegicus</name>
    <name type="common">Rat</name>
    <dbReference type="NCBI Taxonomy" id="10116"/>
    <lineage>
        <taxon>Eukaryota</taxon>
        <taxon>Metazoa</taxon>
        <taxon>Chordata</taxon>
        <taxon>Craniata</taxon>
        <taxon>Vertebrata</taxon>
        <taxon>Euteleostomi</taxon>
        <taxon>Mammalia</taxon>
        <taxon>Eutheria</taxon>
        <taxon>Euarchontoglires</taxon>
        <taxon>Glires</taxon>
        <taxon>Rodentia</taxon>
        <taxon>Myomorpha</taxon>
        <taxon>Muroidea</taxon>
        <taxon>Muridae</taxon>
        <taxon>Murinae</taxon>
        <taxon>Rattus</taxon>
    </lineage>
</organism>
<evidence type="ECO:0000250" key="1">
    <source>
        <dbReference type="UniProtKB" id="Q07617"/>
    </source>
</evidence>
<evidence type="ECO:0000255" key="2"/>
<evidence type="ECO:0000256" key="3">
    <source>
        <dbReference type="SAM" id="MobiDB-lite"/>
    </source>
</evidence>
<evidence type="ECO:0000269" key="4">
    <source>
    </source>
</evidence>
<evidence type="ECO:0007744" key="5">
    <source>
    </source>
</evidence>
<keyword id="KW-0963">Cytoplasm</keyword>
<keyword id="KW-0278">Fertilization</keyword>
<keyword id="KW-0342">GTP-binding</keyword>
<keyword id="KW-0378">Hydrolase</keyword>
<keyword id="KW-0547">Nucleotide-binding</keyword>
<keyword id="KW-0597">Phosphoprotein</keyword>
<keyword id="KW-1185">Reference proteome</keyword>
<keyword id="KW-0677">Repeat</keyword>
<keyword id="KW-0802">TPR repeat</keyword>
<feature type="chain" id="PRO_0000106326" description="Sperm-associated antigen 1">
    <location>
        <begin position="1"/>
        <end position="893"/>
    </location>
</feature>
<feature type="repeat" description="TPR 1">
    <location>
        <begin position="213"/>
        <end position="246"/>
    </location>
</feature>
<feature type="repeat" description="TPR 2">
    <location>
        <begin position="247"/>
        <end position="279"/>
    </location>
</feature>
<feature type="repeat" description="TPR 3">
    <location>
        <begin position="280"/>
        <end position="313"/>
    </location>
</feature>
<feature type="repeat" description="TPR 4">
    <location>
        <begin position="429"/>
        <end position="463"/>
    </location>
</feature>
<feature type="repeat" description="TPR 5">
    <location>
        <begin position="471"/>
        <end position="504"/>
    </location>
</feature>
<feature type="repeat" description="TPR 6">
    <location>
        <begin position="506"/>
        <end position="538"/>
    </location>
</feature>
<feature type="repeat" description="TPR 7">
    <location>
        <begin position="605"/>
        <end position="638"/>
    </location>
</feature>
<feature type="repeat" description="TPR 8">
    <location>
        <begin position="639"/>
        <end position="672"/>
    </location>
</feature>
<feature type="region of interest" description="Disordered" evidence="3">
    <location>
        <begin position="112"/>
        <end position="155"/>
    </location>
</feature>
<feature type="region of interest" description="Disordered" evidence="3">
    <location>
        <begin position="324"/>
        <end position="344"/>
    </location>
</feature>
<feature type="region of interest" description="Disordered" evidence="3">
    <location>
        <begin position="349"/>
        <end position="368"/>
    </location>
</feature>
<feature type="region of interest" description="Disordered" evidence="3">
    <location>
        <begin position="373"/>
        <end position="437"/>
    </location>
</feature>
<feature type="region of interest" description="Disordered" evidence="3">
    <location>
        <begin position="704"/>
        <end position="756"/>
    </location>
</feature>
<feature type="compositionally biased region" description="Basic and acidic residues" evidence="3">
    <location>
        <begin position="112"/>
        <end position="126"/>
    </location>
</feature>
<feature type="compositionally biased region" description="Polar residues" evidence="3">
    <location>
        <begin position="403"/>
        <end position="415"/>
    </location>
</feature>
<feature type="compositionally biased region" description="Basic and acidic residues" evidence="3">
    <location>
        <begin position="416"/>
        <end position="437"/>
    </location>
</feature>
<feature type="compositionally biased region" description="Basic and acidic residues" evidence="3">
    <location>
        <begin position="708"/>
        <end position="733"/>
    </location>
</feature>
<feature type="compositionally biased region" description="Acidic residues" evidence="3">
    <location>
        <begin position="734"/>
        <end position="744"/>
    </location>
</feature>
<feature type="binding site" evidence="2">
    <location>
        <begin position="630"/>
        <end position="637"/>
    </location>
    <ligand>
        <name>GTP</name>
        <dbReference type="ChEBI" id="CHEBI:37565"/>
    </ligand>
</feature>
<feature type="modified residue" description="Phosphoserine" evidence="5">
    <location>
        <position position="351"/>
    </location>
</feature>
<feature type="modified residue" description="Phosphoserine" evidence="5">
    <location>
        <position position="703"/>
    </location>
</feature>
<feature type="modified residue" description="Phosphoserine" evidence="5">
    <location>
        <position position="739"/>
    </location>
</feature>
<feature type="modified residue" description="Phosphoserine" evidence="5">
    <location>
        <position position="740"/>
    </location>
</feature>
<feature type="modified residue" description="Phosphoserine" evidence="1">
    <location>
        <position position="758"/>
    </location>
</feature>
<proteinExistence type="evidence at protein level"/>
<gene>
    <name type="primary">Spag1</name>
</gene>
<protein>
    <recommendedName>
        <fullName>Sperm-associated antigen 1</fullName>
    </recommendedName>
    <alternativeName>
        <fullName>HSD-3.8</fullName>
    </alternativeName>
    <alternativeName>
        <fullName>Infertility-related sperm protein Spag-1</fullName>
    </alternativeName>
</protein>
<comment type="function">
    <text evidence="1 4">May play a role in the cytoplasmic assembly of the ciliary dynein arms (By similarity). Binds GTP and has GTPase activity (By similarity). Plays a role in fertilization (PubMed:11517287).</text>
</comment>
<comment type="subcellular location">
    <subcellularLocation>
        <location evidence="1">Cytoplasm</location>
    </subcellularLocation>
    <subcellularLocation>
        <location evidence="1">Dynein axonemal particle</location>
    </subcellularLocation>
    <text evidence="1">Colocalizes with tubulin.</text>
</comment>
<comment type="tissue specificity">
    <text>Testis and sperm.</text>
</comment>
<comment type="miscellaneous">
    <text>Antibodies against SPAG1 interfere with fertilization.</text>
</comment>
<sequence>MTAKVKDHPPLWGFGTTKTFKIPIEHLDFKYIENCSDVKQLEKILCVLRSGEEGYYPELTEFCEKRLTGLAPRSRALRKDKPAATASSFSAEEWEKIDSDLKSWVSEIKREENTRHFHDPEKHPGVEDPLPPVRGSNSCPRGGKETSSKSKTAKKRIPRDYAEWDKFDVEKECSKIDEDYKEKTVINNKAHLSKIETKIDTAGLTEKEKNFLANREKGKGNEAFYSGDYEEAVMYYTRSLSALPTATAYNNRAQAEIKLQRWSSALEDCEKALELEPGNIKALLRRATTYKHQNKFLEAVDDLRKVLQAEPDNDLAKKTLSEVERELKNSEPASELQTKGKRMVIEEVENSGDEGGKGDEDDHEDDGVDMAAMGNIQKKLMVRSQGGRRSRRARTPMPGAEQQEGQPETGTASTSDNHDLEERRAADSPGDLKSRGNELFRGGQFAEAAVQYSGAIAQLEPTGSENADELSILYSNRAACYLKEGNCRGCIQDCDRALELQPFAVKPLLRRAMAYETLEQYRSAYVDYITVLKIDCRIQLASDSVNRITRILTELDGPKWRERLPPIPAVPASEPLRVWHPAAETPDQDPCPNSCTPTITDEKMFQALKEEGNQLVKDKNYKDAISKYNECLKINSKACAIYTNRALCYLKLGQFEEAKLDCDKALQIDSKNVKASYRLELAQKGLENCRERVADPSQVVLLSPDSSEAARHLDTKNDTAPPSRERERRRIEIQEVDDSSDEEPERPAEASAVEEGWSAERAGKIEVCKPRNAYEFGQVLSTISARKDEEACAQLLVFTAPQDLPVLLSNKLEGDMLLLIMQSLKSHLVAKDPSLVCKHLLYLSKAERFEMMLALTSKDQKEQMAQLFDDLSDAQADCLTAEDIQALRRQYVL</sequence>
<name>SPAG1_RAT</name>
<dbReference type="EMBL" id="BC085828">
    <property type="protein sequence ID" value="AAH85828.1"/>
    <property type="molecule type" value="mRNA"/>
</dbReference>
<dbReference type="RefSeq" id="NP_001012116.1">
    <property type="nucleotide sequence ID" value="NM_001012116.1"/>
</dbReference>
<dbReference type="RefSeq" id="XP_038935140.1">
    <property type="nucleotide sequence ID" value="XM_039079212.2"/>
</dbReference>
<dbReference type="RefSeq" id="XP_038935141.1">
    <property type="nucleotide sequence ID" value="XM_039079213.2"/>
</dbReference>
<dbReference type="SMR" id="Q5U2X2"/>
<dbReference type="FunCoup" id="Q5U2X2">
    <property type="interactions" value="905"/>
</dbReference>
<dbReference type="STRING" id="10116.ENSRNOP00000013801"/>
<dbReference type="iPTMnet" id="Q5U2X2"/>
<dbReference type="PhosphoSitePlus" id="Q5U2X2"/>
<dbReference type="PaxDb" id="10116-ENSRNOP00000013801"/>
<dbReference type="Ensembl" id="ENSRNOT00000013801.6">
    <property type="protein sequence ID" value="ENSRNOP00000013801.5"/>
    <property type="gene ID" value="ENSRNOG00000010078.6"/>
</dbReference>
<dbReference type="GeneID" id="315033"/>
<dbReference type="KEGG" id="rno:315033"/>
<dbReference type="UCSC" id="RGD:1310702">
    <property type="organism name" value="rat"/>
</dbReference>
<dbReference type="AGR" id="RGD:1310702"/>
<dbReference type="CTD" id="6674"/>
<dbReference type="RGD" id="1310702">
    <property type="gene designation" value="Spag1"/>
</dbReference>
<dbReference type="eggNOG" id="KOG1124">
    <property type="taxonomic scope" value="Eukaryota"/>
</dbReference>
<dbReference type="GeneTree" id="ENSGT00940000154697"/>
<dbReference type="HOGENOM" id="CLU_008405_1_0_1"/>
<dbReference type="InParanoid" id="Q5U2X2"/>
<dbReference type="OMA" id="ECTIYTN"/>
<dbReference type="OrthoDB" id="2942533at2759"/>
<dbReference type="PhylomeDB" id="Q5U2X2"/>
<dbReference type="TreeFam" id="TF106251"/>
<dbReference type="PRO" id="PR:Q5U2X2"/>
<dbReference type="Proteomes" id="UP000002494">
    <property type="component" value="Chromosome 7"/>
</dbReference>
<dbReference type="Bgee" id="ENSRNOG00000010078">
    <property type="expression patterns" value="Expressed in testis and 19 other cell types or tissues"/>
</dbReference>
<dbReference type="GO" id="GO:0005737">
    <property type="term" value="C:cytoplasm"/>
    <property type="evidence" value="ECO:0000250"/>
    <property type="project" value="UniProtKB"/>
</dbReference>
<dbReference type="GO" id="GO:0005829">
    <property type="term" value="C:cytosol"/>
    <property type="evidence" value="ECO:0000318"/>
    <property type="project" value="GO_Central"/>
</dbReference>
<dbReference type="GO" id="GO:0120293">
    <property type="term" value="C:dynein axonemal particle"/>
    <property type="evidence" value="ECO:0007669"/>
    <property type="project" value="UniProtKB-SubCell"/>
</dbReference>
<dbReference type="GO" id="GO:0101031">
    <property type="term" value="C:protein folding chaperone complex"/>
    <property type="evidence" value="ECO:0000266"/>
    <property type="project" value="RGD"/>
</dbReference>
<dbReference type="GO" id="GO:0005525">
    <property type="term" value="F:GTP binding"/>
    <property type="evidence" value="ECO:0007669"/>
    <property type="project" value="UniProtKB-KW"/>
</dbReference>
<dbReference type="GO" id="GO:0016787">
    <property type="term" value="F:hydrolase activity"/>
    <property type="evidence" value="ECO:0007669"/>
    <property type="project" value="UniProtKB-KW"/>
</dbReference>
<dbReference type="GO" id="GO:0070286">
    <property type="term" value="P:axonemal dynein complex assembly"/>
    <property type="evidence" value="ECO:0000250"/>
    <property type="project" value="UniProtKB"/>
</dbReference>
<dbReference type="GO" id="GO:0007338">
    <property type="term" value="P:single fertilization"/>
    <property type="evidence" value="ECO:0007669"/>
    <property type="project" value="UniProtKB-KW"/>
</dbReference>
<dbReference type="FunFam" id="1.25.40.10:FF:000221">
    <property type="entry name" value="Mitochondrial import receptor subunit TOM34"/>
    <property type="match status" value="1"/>
</dbReference>
<dbReference type="FunFam" id="1.25.40.10:FF:000375">
    <property type="entry name" value="Sperm associated antigen 1"/>
    <property type="match status" value="1"/>
</dbReference>
<dbReference type="Gene3D" id="1.25.40.10">
    <property type="entry name" value="Tetratricopeptide repeat domain"/>
    <property type="match status" value="3"/>
</dbReference>
<dbReference type="InterPro" id="IPR051982">
    <property type="entry name" value="CiliaryAsmbly_MitoImport"/>
</dbReference>
<dbReference type="InterPro" id="IPR025986">
    <property type="entry name" value="RPAP3-like_C"/>
</dbReference>
<dbReference type="InterPro" id="IPR011990">
    <property type="entry name" value="TPR-like_helical_dom_sf"/>
</dbReference>
<dbReference type="InterPro" id="IPR019734">
    <property type="entry name" value="TPR_rpt"/>
</dbReference>
<dbReference type="PANTHER" id="PTHR45984">
    <property type="entry name" value="RNA (RNA) POLYMERASE II ASSOCIATED PROTEIN HOMOLOG"/>
    <property type="match status" value="1"/>
</dbReference>
<dbReference type="PANTHER" id="PTHR45984:SF3">
    <property type="entry name" value="SPERM-ASSOCIATED ANTIGEN 1"/>
    <property type="match status" value="1"/>
</dbReference>
<dbReference type="Pfam" id="PF13877">
    <property type="entry name" value="RPAP3_C"/>
    <property type="match status" value="1"/>
</dbReference>
<dbReference type="Pfam" id="PF00515">
    <property type="entry name" value="TPR_1"/>
    <property type="match status" value="2"/>
</dbReference>
<dbReference type="Pfam" id="PF13181">
    <property type="entry name" value="TPR_8"/>
    <property type="match status" value="1"/>
</dbReference>
<dbReference type="SMART" id="SM00028">
    <property type="entry name" value="TPR"/>
    <property type="match status" value="8"/>
</dbReference>
<dbReference type="SUPFAM" id="SSF48452">
    <property type="entry name" value="TPR-like"/>
    <property type="match status" value="3"/>
</dbReference>
<dbReference type="PROSITE" id="PS50005">
    <property type="entry name" value="TPR"/>
    <property type="match status" value="5"/>
</dbReference>
<dbReference type="PROSITE" id="PS50293">
    <property type="entry name" value="TPR_REGION"/>
    <property type="match status" value="4"/>
</dbReference>